<reference key="1">
    <citation type="journal article" date="2005" name="J. Bacteriol.">
        <title>Whole-genome sequence analysis of Pseudomonas syringae pv. phaseolicola 1448A reveals divergence among pathovars in genes involved in virulence and transposition.</title>
        <authorList>
            <person name="Joardar V."/>
            <person name="Lindeberg M."/>
            <person name="Jackson R.W."/>
            <person name="Selengut J."/>
            <person name="Dodson R."/>
            <person name="Brinkac L.M."/>
            <person name="Daugherty S.C."/>
            <person name="DeBoy R.T."/>
            <person name="Durkin A.S."/>
            <person name="Gwinn Giglio M."/>
            <person name="Madupu R."/>
            <person name="Nelson W.C."/>
            <person name="Rosovitz M.J."/>
            <person name="Sullivan S.A."/>
            <person name="Crabtree J."/>
            <person name="Creasy T."/>
            <person name="Davidsen T.M."/>
            <person name="Haft D.H."/>
            <person name="Zafar N."/>
            <person name="Zhou L."/>
            <person name="Halpin R."/>
            <person name="Holley T."/>
            <person name="Khouri H.M."/>
            <person name="Feldblyum T.V."/>
            <person name="White O."/>
            <person name="Fraser C.M."/>
            <person name="Chatterjee A.K."/>
            <person name="Cartinhour S."/>
            <person name="Schneider D."/>
            <person name="Mansfield J.W."/>
            <person name="Collmer A."/>
            <person name="Buell R."/>
        </authorList>
    </citation>
    <scope>NUCLEOTIDE SEQUENCE [LARGE SCALE GENOMIC DNA]</scope>
    <source>
        <strain>1448A / Race 6</strain>
    </source>
</reference>
<name>RL13_PSE14</name>
<feature type="chain" id="PRO_0000261773" description="Large ribosomal subunit protein uL13">
    <location>
        <begin position="1"/>
        <end position="142"/>
    </location>
</feature>
<accession>Q48EE0</accession>
<gene>
    <name evidence="1" type="primary">rplM</name>
    <name type="ordered locus">PSPPH_4126</name>
</gene>
<proteinExistence type="inferred from homology"/>
<evidence type="ECO:0000255" key="1">
    <source>
        <dbReference type="HAMAP-Rule" id="MF_01366"/>
    </source>
</evidence>
<evidence type="ECO:0000305" key="2"/>
<protein>
    <recommendedName>
        <fullName evidence="1">Large ribosomal subunit protein uL13</fullName>
    </recommendedName>
    <alternativeName>
        <fullName evidence="2">50S ribosomal protein L13</fullName>
    </alternativeName>
</protein>
<organism>
    <name type="scientific">Pseudomonas savastanoi pv. phaseolicola (strain 1448A / Race 6)</name>
    <name type="common">Pseudomonas syringae pv. phaseolicola (strain 1448A / Race 6)</name>
    <dbReference type="NCBI Taxonomy" id="264730"/>
    <lineage>
        <taxon>Bacteria</taxon>
        <taxon>Pseudomonadati</taxon>
        <taxon>Pseudomonadota</taxon>
        <taxon>Gammaproteobacteria</taxon>
        <taxon>Pseudomonadales</taxon>
        <taxon>Pseudomonadaceae</taxon>
        <taxon>Pseudomonas</taxon>
    </lineage>
</organism>
<dbReference type="EMBL" id="CP000058">
    <property type="protein sequence ID" value="AAZ35214.1"/>
    <property type="molecule type" value="Genomic_DNA"/>
</dbReference>
<dbReference type="RefSeq" id="WP_002555065.1">
    <property type="nucleotide sequence ID" value="NC_005773.3"/>
</dbReference>
<dbReference type="SMR" id="Q48EE0"/>
<dbReference type="GeneID" id="96220600"/>
<dbReference type="KEGG" id="psp:PSPPH_4126"/>
<dbReference type="eggNOG" id="COG0102">
    <property type="taxonomic scope" value="Bacteria"/>
</dbReference>
<dbReference type="HOGENOM" id="CLU_082184_2_2_6"/>
<dbReference type="Proteomes" id="UP000000551">
    <property type="component" value="Chromosome"/>
</dbReference>
<dbReference type="GO" id="GO:0022625">
    <property type="term" value="C:cytosolic large ribosomal subunit"/>
    <property type="evidence" value="ECO:0007669"/>
    <property type="project" value="TreeGrafter"/>
</dbReference>
<dbReference type="GO" id="GO:0003729">
    <property type="term" value="F:mRNA binding"/>
    <property type="evidence" value="ECO:0007669"/>
    <property type="project" value="TreeGrafter"/>
</dbReference>
<dbReference type="GO" id="GO:0003735">
    <property type="term" value="F:structural constituent of ribosome"/>
    <property type="evidence" value="ECO:0007669"/>
    <property type="project" value="InterPro"/>
</dbReference>
<dbReference type="GO" id="GO:0017148">
    <property type="term" value="P:negative regulation of translation"/>
    <property type="evidence" value="ECO:0007669"/>
    <property type="project" value="TreeGrafter"/>
</dbReference>
<dbReference type="GO" id="GO:0006412">
    <property type="term" value="P:translation"/>
    <property type="evidence" value="ECO:0007669"/>
    <property type="project" value="UniProtKB-UniRule"/>
</dbReference>
<dbReference type="CDD" id="cd00392">
    <property type="entry name" value="Ribosomal_L13"/>
    <property type="match status" value="1"/>
</dbReference>
<dbReference type="FunFam" id="3.90.1180.10:FF:000001">
    <property type="entry name" value="50S ribosomal protein L13"/>
    <property type="match status" value="1"/>
</dbReference>
<dbReference type="Gene3D" id="3.90.1180.10">
    <property type="entry name" value="Ribosomal protein L13"/>
    <property type="match status" value="1"/>
</dbReference>
<dbReference type="HAMAP" id="MF_01366">
    <property type="entry name" value="Ribosomal_uL13"/>
    <property type="match status" value="1"/>
</dbReference>
<dbReference type="InterPro" id="IPR005822">
    <property type="entry name" value="Ribosomal_uL13"/>
</dbReference>
<dbReference type="InterPro" id="IPR005823">
    <property type="entry name" value="Ribosomal_uL13_bac-type"/>
</dbReference>
<dbReference type="InterPro" id="IPR023563">
    <property type="entry name" value="Ribosomal_uL13_CS"/>
</dbReference>
<dbReference type="InterPro" id="IPR036899">
    <property type="entry name" value="Ribosomal_uL13_sf"/>
</dbReference>
<dbReference type="NCBIfam" id="TIGR01066">
    <property type="entry name" value="rplM_bact"/>
    <property type="match status" value="1"/>
</dbReference>
<dbReference type="PANTHER" id="PTHR11545:SF2">
    <property type="entry name" value="LARGE RIBOSOMAL SUBUNIT PROTEIN UL13M"/>
    <property type="match status" value="1"/>
</dbReference>
<dbReference type="PANTHER" id="PTHR11545">
    <property type="entry name" value="RIBOSOMAL PROTEIN L13"/>
    <property type="match status" value="1"/>
</dbReference>
<dbReference type="Pfam" id="PF00572">
    <property type="entry name" value="Ribosomal_L13"/>
    <property type="match status" value="1"/>
</dbReference>
<dbReference type="PIRSF" id="PIRSF002181">
    <property type="entry name" value="Ribosomal_L13"/>
    <property type="match status" value="1"/>
</dbReference>
<dbReference type="SUPFAM" id="SSF52161">
    <property type="entry name" value="Ribosomal protein L13"/>
    <property type="match status" value="1"/>
</dbReference>
<dbReference type="PROSITE" id="PS00783">
    <property type="entry name" value="RIBOSOMAL_L13"/>
    <property type="match status" value="1"/>
</dbReference>
<keyword id="KW-0687">Ribonucleoprotein</keyword>
<keyword id="KW-0689">Ribosomal protein</keyword>
<sequence length="142" mass="15878">MKTFTAKPETVKRDWFVVDAAGQTLGRLATEIASRLRGKHKPEYTPHVDTGDYIVVINAEQIRVTGAKTTDKIYYSHSGFPGGIKSINFEKLIAKAPERVIETAVKGMLPKNPLGRDMYRKLKVYAGAVHPHTAQQPQELKF</sequence>
<comment type="function">
    <text evidence="1">This protein is one of the early assembly proteins of the 50S ribosomal subunit, although it is not seen to bind rRNA by itself. It is important during the early stages of 50S assembly.</text>
</comment>
<comment type="subunit">
    <text evidence="1">Part of the 50S ribosomal subunit.</text>
</comment>
<comment type="similarity">
    <text evidence="1">Belongs to the universal ribosomal protein uL13 family.</text>
</comment>